<reference key="1">
    <citation type="journal article" date="2001" name="J. Bacteriol.">
        <title>Identification of the structural gene for the TDP-Fuc4NAc:Lipid II Fuc4NAc transferase involved in synthesis of enterobacterial common antigen in Escherichia coli K-12.</title>
        <authorList>
            <person name="Rahman A."/>
            <person name="Barr K."/>
            <person name="Rick P.D."/>
        </authorList>
    </citation>
    <scope>NUCLEOTIDE SEQUENCE [GENOMIC DNA]</scope>
    <scope>FUNCTION</scope>
    <scope>CATALYTIC ACTIVITY</scope>
</reference>
<reference key="2">
    <citation type="journal article" date="1992" name="Science">
        <title>Analysis of the Escherichia coli genome: DNA sequence of the region from 84.5 to 86.5 minutes.</title>
        <authorList>
            <person name="Daniels D.L."/>
            <person name="Plunkett G. III"/>
            <person name="Burland V.D."/>
            <person name="Blattner F.R."/>
        </authorList>
    </citation>
    <scope>NUCLEOTIDE SEQUENCE [LARGE SCALE GENOMIC DNA]</scope>
    <source>
        <strain>K12 / MG1655 / ATCC 47076</strain>
    </source>
</reference>
<reference key="3">
    <citation type="journal article" date="1997" name="Science">
        <title>The complete genome sequence of Escherichia coli K-12.</title>
        <authorList>
            <person name="Blattner F.R."/>
            <person name="Plunkett G. III"/>
            <person name="Bloch C.A."/>
            <person name="Perna N.T."/>
            <person name="Burland V."/>
            <person name="Riley M."/>
            <person name="Collado-Vides J."/>
            <person name="Glasner J.D."/>
            <person name="Rode C.K."/>
            <person name="Mayhew G.F."/>
            <person name="Gregor J."/>
            <person name="Davis N.W."/>
            <person name="Kirkpatrick H.A."/>
            <person name="Goeden M.A."/>
            <person name="Rose D.J."/>
            <person name="Mau B."/>
            <person name="Shao Y."/>
        </authorList>
    </citation>
    <scope>NUCLEOTIDE SEQUENCE [LARGE SCALE GENOMIC DNA]</scope>
    <source>
        <strain>K12 / MG1655 / ATCC 47076</strain>
    </source>
</reference>
<reference key="4">
    <citation type="journal article" date="2006" name="Nucleic Acids Res.">
        <title>Escherichia coli K-12: a cooperatively developed annotation snapshot -- 2005.</title>
        <authorList>
            <person name="Riley M."/>
            <person name="Abe T."/>
            <person name="Arnaud M.B."/>
            <person name="Berlyn M.K.B."/>
            <person name="Blattner F.R."/>
            <person name="Chaudhuri R.R."/>
            <person name="Glasner J.D."/>
            <person name="Horiuchi T."/>
            <person name="Keseler I.M."/>
            <person name="Kosuge T."/>
            <person name="Mori H."/>
            <person name="Perna N.T."/>
            <person name="Plunkett G. III"/>
            <person name="Rudd K.E."/>
            <person name="Serres M.H."/>
            <person name="Thomas G.H."/>
            <person name="Thomson N.R."/>
            <person name="Wishart D."/>
            <person name="Wanner B.L."/>
        </authorList>
    </citation>
    <scope>SEQUENCE REVISION</scope>
</reference>
<reference key="5">
    <citation type="journal article" date="2006" name="Mol. Syst. Biol.">
        <title>Highly accurate genome sequences of Escherichia coli K-12 strains MG1655 and W3110.</title>
        <authorList>
            <person name="Hayashi K."/>
            <person name="Morooka N."/>
            <person name="Yamamoto Y."/>
            <person name="Fujita K."/>
            <person name="Isono K."/>
            <person name="Choi S."/>
            <person name="Ohtsubo E."/>
            <person name="Baba T."/>
            <person name="Wanner B.L."/>
            <person name="Mori H."/>
            <person name="Horiuchi T."/>
        </authorList>
    </citation>
    <scope>NUCLEOTIDE SEQUENCE [LARGE SCALE GENOMIC DNA]</scope>
    <source>
        <strain>K12 / W3110 / ATCC 27325 / DSM 5911</strain>
    </source>
</reference>
<accession>P56258</accession>
<accession>Q2M8A1</accession>
<accession>Q93DX7</accession>
<gene>
    <name type="primary">wecF</name>
    <name type="synonym">rffT</name>
    <name type="synonym">yifM</name>
    <name type="ordered locus">b4481</name>
    <name type="ordered locus">JW5596</name>
</gene>
<name>WECF_ECOLI</name>
<proteinExistence type="evidence at protein level"/>
<sequence>MTVLIHVLGSDIPHHNRTVLRFFNDALAATSEHAREFMVVGKDDGLSDSCPALSVQFFPGKKSLAEAVIAKAKANRQQRFFFHGQFNPTLWLALLSGGIKPSQFFWHIWGADLYELSSGLRYKLFYPLRRLAQKRVGCVFATRGDLSFFAKTHPKVRGELLFFPTRMDPSLNTMANDRQREGKMTILVGNSGDRSNEHIAALRAVHQQFGDTVKVVVPMGYPPNNEAYIEEVRQAGLELFSEENLQILSEKLEFDAYLALLRQCDLGYFIFARQQGIGTLCLLIQAGIPCVLNRENPFWQDMTEQHLPVLFTTDDLNEDIVREAQRQLASVDKNTIAFFSPNYLQGWQRALAIAAREVA</sequence>
<feature type="chain" id="PRO_0000216180" description="TDP-N-acetylfucosamine:lipid II N-acetylfucosaminyltransferase">
    <location>
        <begin position="1"/>
        <end position="359"/>
    </location>
</feature>
<feature type="sequence conflict" description="In Ref. 2; AAA67593." evidence="2" ref="2">
    <original>A</original>
    <variation>G</variation>
    <location>
        <position position="132"/>
    </location>
</feature>
<dbReference type="EC" id="2.4.1.325"/>
<dbReference type="EMBL" id="AF375882">
    <property type="protein sequence ID" value="AAK62972.1"/>
    <property type="molecule type" value="Genomic_DNA"/>
</dbReference>
<dbReference type="EMBL" id="M87049">
    <property type="protein sequence ID" value="AAA67593.1"/>
    <property type="status" value="ALT_FRAME"/>
    <property type="molecule type" value="Genomic_DNA"/>
</dbReference>
<dbReference type="EMBL" id="U00096">
    <property type="protein sequence ID" value="AAT48215.1"/>
    <property type="molecule type" value="Genomic_DNA"/>
</dbReference>
<dbReference type="EMBL" id="AP009048">
    <property type="protein sequence ID" value="BAE77505.1"/>
    <property type="molecule type" value="Genomic_DNA"/>
</dbReference>
<dbReference type="RefSeq" id="WP_000217234.1">
    <property type="nucleotide sequence ID" value="NZ_LN832404.1"/>
</dbReference>
<dbReference type="RefSeq" id="YP_026257.1">
    <property type="nucleotide sequence ID" value="NC_000913.3"/>
</dbReference>
<dbReference type="BioGRID" id="4262106">
    <property type="interactions" value="183"/>
</dbReference>
<dbReference type="BioGRID" id="853430">
    <property type="interactions" value="3"/>
</dbReference>
<dbReference type="FunCoup" id="P56258">
    <property type="interactions" value="17"/>
</dbReference>
<dbReference type="IntAct" id="P56258">
    <property type="interactions" value="3"/>
</dbReference>
<dbReference type="STRING" id="511145.b4481"/>
<dbReference type="CAZy" id="GT56">
    <property type="family name" value="Glycosyltransferase Family 56"/>
</dbReference>
<dbReference type="jPOST" id="P56258"/>
<dbReference type="PaxDb" id="511145-b4481"/>
<dbReference type="EnsemblBacteria" id="AAT48215">
    <property type="protein sequence ID" value="AAT48215"/>
    <property type="gene ID" value="b4481"/>
</dbReference>
<dbReference type="GeneID" id="2847677"/>
<dbReference type="KEGG" id="ecj:JW5596"/>
<dbReference type="KEGG" id="eco:b4481"/>
<dbReference type="KEGG" id="ecoc:C3026_20535"/>
<dbReference type="PATRIC" id="fig|1411691.4.peg.2913"/>
<dbReference type="EchoBASE" id="EB4066"/>
<dbReference type="eggNOG" id="COG0554">
    <property type="taxonomic scope" value="Bacteria"/>
</dbReference>
<dbReference type="HOGENOM" id="CLU_066584_0_0_6"/>
<dbReference type="InParanoid" id="P56258"/>
<dbReference type="OMA" id="VIVPMGY"/>
<dbReference type="OrthoDB" id="6532169at2"/>
<dbReference type="PhylomeDB" id="P56258"/>
<dbReference type="BioCyc" id="EcoCyc:G7800-MONOMER"/>
<dbReference type="BioCyc" id="MetaCyc:G7800-MONOMER"/>
<dbReference type="UniPathway" id="UPA00566"/>
<dbReference type="PRO" id="PR:P56258"/>
<dbReference type="Proteomes" id="UP000000625">
    <property type="component" value="Chromosome"/>
</dbReference>
<dbReference type="GO" id="GO:0005886">
    <property type="term" value="C:plasma membrane"/>
    <property type="evidence" value="ECO:0007669"/>
    <property type="project" value="UniProtKB-SubCell"/>
</dbReference>
<dbReference type="GO" id="GO:0102031">
    <property type="term" value="F:4-acetamido-4,6-dideoxy-D-galactose transferase activity"/>
    <property type="evidence" value="ECO:0000314"/>
    <property type="project" value="EcoCyc"/>
</dbReference>
<dbReference type="GO" id="GO:0008417">
    <property type="term" value="F:fucosyltransferase activity"/>
    <property type="evidence" value="ECO:0007669"/>
    <property type="project" value="InterPro"/>
</dbReference>
<dbReference type="GO" id="GO:0009246">
    <property type="term" value="P:enterobacterial common antigen biosynthetic process"/>
    <property type="evidence" value="ECO:0000315"/>
    <property type="project" value="EcoCyc"/>
</dbReference>
<dbReference type="GO" id="GO:0036065">
    <property type="term" value="P:fucosylation"/>
    <property type="evidence" value="ECO:0007669"/>
    <property type="project" value="InterPro"/>
</dbReference>
<dbReference type="HAMAP" id="MF_01002">
    <property type="entry name" value="WecF_RffT"/>
    <property type="match status" value="1"/>
</dbReference>
<dbReference type="InterPro" id="IPR009993">
    <property type="entry name" value="WecF"/>
</dbReference>
<dbReference type="NCBIfam" id="NF002752">
    <property type="entry name" value="PRK02797.1-1"/>
    <property type="match status" value="1"/>
</dbReference>
<dbReference type="NCBIfam" id="NF002753">
    <property type="entry name" value="PRK02797.1-2"/>
    <property type="match status" value="1"/>
</dbReference>
<dbReference type="NCBIfam" id="NF002754">
    <property type="entry name" value="PRK02797.1-3"/>
    <property type="match status" value="1"/>
</dbReference>
<dbReference type="Pfam" id="PF07429">
    <property type="entry name" value="Glyco_transf_56"/>
    <property type="match status" value="1"/>
</dbReference>
<evidence type="ECO:0000269" key="1">
    <source>
    </source>
</evidence>
<evidence type="ECO:0000305" key="2"/>
<keyword id="KW-0997">Cell inner membrane</keyword>
<keyword id="KW-1003">Cell membrane</keyword>
<keyword id="KW-0328">Glycosyltransferase</keyword>
<keyword id="KW-0472">Membrane</keyword>
<keyword id="KW-1185">Reference proteome</keyword>
<keyword id="KW-0808">Transferase</keyword>
<protein>
    <recommendedName>
        <fullName>TDP-N-acetylfucosamine:lipid II N-acetylfucosaminyltransferase</fullName>
        <ecNumber>2.4.1.325</ecNumber>
    </recommendedName>
    <alternativeName>
        <fullName>4-alpha-L-fucosyltransferase</fullName>
    </alternativeName>
    <alternativeName>
        <fullName>TDP-Fuc4NAc:lipid II Fuc4NAc transferase</fullName>
        <shortName>Fuc4NAc transferase</shortName>
    </alternativeName>
</protein>
<organism>
    <name type="scientific">Escherichia coli (strain K12)</name>
    <dbReference type="NCBI Taxonomy" id="83333"/>
    <lineage>
        <taxon>Bacteria</taxon>
        <taxon>Pseudomonadati</taxon>
        <taxon>Pseudomonadota</taxon>
        <taxon>Gammaproteobacteria</taxon>
        <taxon>Enterobacterales</taxon>
        <taxon>Enterobacteriaceae</taxon>
        <taxon>Escherichia</taxon>
    </lineage>
</organism>
<comment type="function">
    <text evidence="1">Catalyzes the synthesis of Und-PP-GlcNAc-ManNAcA-Fuc4NAc (Lipid III), the third lipid-linked intermediate involved in ECA synthesis.</text>
</comment>
<comment type="catalytic activity">
    <reaction evidence="1">
        <text>beta-D-ManNAcA-(1-&gt;4)-alpha-D-GlcNAc-di-trans,octa-cis-undecaprenyl diphosphate + dTDP-4-acetamido-4,6-dideoxy-alpha-D-galactose = alpha-D-FucNAc4-(1-&gt;4)-beta-D-ManNAcA-(1-&gt;4)-D-GlcNAc-undecaprenyl diphosphate + dTDP + H(+)</text>
        <dbReference type="Rhea" id="RHEA:28759"/>
        <dbReference type="ChEBI" id="CHEBI:15378"/>
        <dbReference type="ChEBI" id="CHEBI:58369"/>
        <dbReference type="ChEBI" id="CHEBI:61495"/>
        <dbReference type="ChEBI" id="CHEBI:61496"/>
        <dbReference type="ChEBI" id="CHEBI:68493"/>
        <dbReference type="EC" id="2.4.1.325"/>
    </reaction>
</comment>
<comment type="pathway">
    <text>Bacterial outer membrane biogenesis; enterobacterial common antigen biosynthesis.</text>
</comment>
<comment type="subcellular location">
    <subcellularLocation>
        <location evidence="2">Cell inner membrane</location>
        <topology evidence="2">Peripheral membrane protein</topology>
    </subcellularLocation>
</comment>
<comment type="similarity">
    <text evidence="2">Belongs to the glycosyltransferase 56 family.</text>
</comment>
<comment type="sequence caution" evidence="2">
    <conflict type="frameshift">
        <sequence resource="EMBL-CDS" id="AAA67593"/>
    </conflict>
</comment>